<sequence>MEARDILKRPVITEKSSEAMAEDKYTFDVDTRVNKTQVKMAVEEIFNVKVASVNIMNYKPKKKRMGRYQGYTNKRRKAIVTLKEGSIDLFN</sequence>
<gene>
    <name evidence="1" type="primary">rplW</name>
    <name type="ordered locus">SAUSA300_2202</name>
</gene>
<protein>
    <recommendedName>
        <fullName evidence="1">Large ribosomal subunit protein uL23</fullName>
    </recommendedName>
    <alternativeName>
        <fullName evidence="2">50S ribosomal protein L23</fullName>
    </alternativeName>
</protein>
<dbReference type="EMBL" id="CP000255">
    <property type="protein sequence ID" value="ABD21361.1"/>
    <property type="molecule type" value="Genomic_DNA"/>
</dbReference>
<dbReference type="RefSeq" id="WP_000388082.1">
    <property type="nucleotide sequence ID" value="NZ_CP027476.1"/>
</dbReference>
<dbReference type="SMR" id="Q2FEP1"/>
<dbReference type="KEGG" id="saa:SAUSA300_2202"/>
<dbReference type="HOGENOM" id="CLU_037562_3_2_9"/>
<dbReference type="Proteomes" id="UP000001939">
    <property type="component" value="Chromosome"/>
</dbReference>
<dbReference type="GO" id="GO:1990904">
    <property type="term" value="C:ribonucleoprotein complex"/>
    <property type="evidence" value="ECO:0007669"/>
    <property type="project" value="UniProtKB-KW"/>
</dbReference>
<dbReference type="GO" id="GO:0005840">
    <property type="term" value="C:ribosome"/>
    <property type="evidence" value="ECO:0007669"/>
    <property type="project" value="UniProtKB-KW"/>
</dbReference>
<dbReference type="GO" id="GO:0019843">
    <property type="term" value="F:rRNA binding"/>
    <property type="evidence" value="ECO:0007669"/>
    <property type="project" value="UniProtKB-UniRule"/>
</dbReference>
<dbReference type="GO" id="GO:0003735">
    <property type="term" value="F:structural constituent of ribosome"/>
    <property type="evidence" value="ECO:0007669"/>
    <property type="project" value="InterPro"/>
</dbReference>
<dbReference type="GO" id="GO:0006412">
    <property type="term" value="P:translation"/>
    <property type="evidence" value="ECO:0007669"/>
    <property type="project" value="UniProtKB-UniRule"/>
</dbReference>
<dbReference type="FunFam" id="3.30.70.330:FF:000001">
    <property type="entry name" value="50S ribosomal protein L23"/>
    <property type="match status" value="1"/>
</dbReference>
<dbReference type="Gene3D" id="3.30.70.330">
    <property type="match status" value="1"/>
</dbReference>
<dbReference type="HAMAP" id="MF_01369_B">
    <property type="entry name" value="Ribosomal_uL23_B"/>
    <property type="match status" value="1"/>
</dbReference>
<dbReference type="InterPro" id="IPR012677">
    <property type="entry name" value="Nucleotide-bd_a/b_plait_sf"/>
</dbReference>
<dbReference type="InterPro" id="IPR013025">
    <property type="entry name" value="Ribosomal_uL23-like"/>
</dbReference>
<dbReference type="InterPro" id="IPR012678">
    <property type="entry name" value="Ribosomal_uL23/eL15/eS24_sf"/>
</dbReference>
<dbReference type="NCBIfam" id="NF004363">
    <property type="entry name" value="PRK05738.2-4"/>
    <property type="match status" value="1"/>
</dbReference>
<dbReference type="PANTHER" id="PTHR11620">
    <property type="entry name" value="60S RIBOSOMAL PROTEIN L23A"/>
    <property type="match status" value="1"/>
</dbReference>
<dbReference type="Pfam" id="PF00276">
    <property type="entry name" value="Ribosomal_L23"/>
    <property type="match status" value="1"/>
</dbReference>
<dbReference type="SUPFAM" id="SSF54189">
    <property type="entry name" value="Ribosomal proteins S24e, L23 and L15e"/>
    <property type="match status" value="1"/>
</dbReference>
<organism>
    <name type="scientific">Staphylococcus aureus (strain USA300)</name>
    <dbReference type="NCBI Taxonomy" id="367830"/>
    <lineage>
        <taxon>Bacteria</taxon>
        <taxon>Bacillati</taxon>
        <taxon>Bacillota</taxon>
        <taxon>Bacilli</taxon>
        <taxon>Bacillales</taxon>
        <taxon>Staphylococcaceae</taxon>
        <taxon>Staphylococcus</taxon>
    </lineage>
</organism>
<reference key="1">
    <citation type="journal article" date="2006" name="Lancet">
        <title>Complete genome sequence of USA300, an epidemic clone of community-acquired meticillin-resistant Staphylococcus aureus.</title>
        <authorList>
            <person name="Diep B.A."/>
            <person name="Gill S.R."/>
            <person name="Chang R.F."/>
            <person name="Phan T.H."/>
            <person name="Chen J.H."/>
            <person name="Davidson M.G."/>
            <person name="Lin F."/>
            <person name="Lin J."/>
            <person name="Carleton H.A."/>
            <person name="Mongodin E.F."/>
            <person name="Sensabaugh G.F."/>
            <person name="Perdreau-Remington F."/>
        </authorList>
    </citation>
    <scope>NUCLEOTIDE SEQUENCE [LARGE SCALE GENOMIC DNA]</scope>
    <source>
        <strain>USA300</strain>
    </source>
</reference>
<accession>Q2FEP1</accession>
<keyword id="KW-0687">Ribonucleoprotein</keyword>
<keyword id="KW-0689">Ribosomal protein</keyword>
<keyword id="KW-0694">RNA-binding</keyword>
<keyword id="KW-0699">rRNA-binding</keyword>
<proteinExistence type="inferred from homology"/>
<comment type="function">
    <text evidence="1">One of the early assembly proteins it binds 23S rRNA. One of the proteins that surrounds the polypeptide exit tunnel on the outside of the ribosome. Forms the main docking site for trigger factor binding to the ribosome.</text>
</comment>
<comment type="subunit">
    <text evidence="1">Part of the 50S ribosomal subunit. Contacts protein L29, and trigger factor when it is bound to the ribosome.</text>
</comment>
<comment type="similarity">
    <text evidence="1">Belongs to the universal ribosomal protein uL23 family.</text>
</comment>
<feature type="chain" id="PRO_0000272853" description="Large ribosomal subunit protein uL23">
    <location>
        <begin position="1"/>
        <end position="91"/>
    </location>
</feature>
<name>RL23_STAA3</name>
<evidence type="ECO:0000255" key="1">
    <source>
        <dbReference type="HAMAP-Rule" id="MF_01369"/>
    </source>
</evidence>
<evidence type="ECO:0000305" key="2"/>